<dbReference type="EC" id="1.1.1.25" evidence="1"/>
<dbReference type="EMBL" id="CP000038">
    <property type="protein sequence ID" value="AAZ89985.1"/>
    <property type="molecule type" value="Genomic_DNA"/>
</dbReference>
<dbReference type="RefSeq" id="WP_000451216.1">
    <property type="nucleotide sequence ID" value="NC_007384.1"/>
</dbReference>
<dbReference type="SMR" id="Q3YWX7"/>
<dbReference type="GeneID" id="93778706"/>
<dbReference type="KEGG" id="ssn:SSON_3422"/>
<dbReference type="HOGENOM" id="CLU_044063_2_1_6"/>
<dbReference type="UniPathway" id="UPA00053">
    <property type="reaction ID" value="UER00087"/>
</dbReference>
<dbReference type="Proteomes" id="UP000002529">
    <property type="component" value="Chromosome"/>
</dbReference>
<dbReference type="GO" id="GO:0005829">
    <property type="term" value="C:cytosol"/>
    <property type="evidence" value="ECO:0007669"/>
    <property type="project" value="TreeGrafter"/>
</dbReference>
<dbReference type="GO" id="GO:0050661">
    <property type="term" value="F:NADP binding"/>
    <property type="evidence" value="ECO:0007669"/>
    <property type="project" value="InterPro"/>
</dbReference>
<dbReference type="GO" id="GO:0004764">
    <property type="term" value="F:shikimate 3-dehydrogenase (NADP+) activity"/>
    <property type="evidence" value="ECO:0007669"/>
    <property type="project" value="UniProtKB-UniRule"/>
</dbReference>
<dbReference type="GO" id="GO:0008652">
    <property type="term" value="P:amino acid biosynthetic process"/>
    <property type="evidence" value="ECO:0007669"/>
    <property type="project" value="UniProtKB-KW"/>
</dbReference>
<dbReference type="GO" id="GO:0009073">
    <property type="term" value="P:aromatic amino acid family biosynthetic process"/>
    <property type="evidence" value="ECO:0007669"/>
    <property type="project" value="UniProtKB-KW"/>
</dbReference>
<dbReference type="GO" id="GO:0009423">
    <property type="term" value="P:chorismate biosynthetic process"/>
    <property type="evidence" value="ECO:0007669"/>
    <property type="project" value="UniProtKB-UniRule"/>
</dbReference>
<dbReference type="GO" id="GO:0019632">
    <property type="term" value="P:shikimate metabolic process"/>
    <property type="evidence" value="ECO:0007669"/>
    <property type="project" value="InterPro"/>
</dbReference>
<dbReference type="CDD" id="cd01065">
    <property type="entry name" value="NAD_bind_Shikimate_DH"/>
    <property type="match status" value="1"/>
</dbReference>
<dbReference type="FunFam" id="3.40.50.10860:FF:000006">
    <property type="entry name" value="Shikimate dehydrogenase (NADP(+))"/>
    <property type="match status" value="1"/>
</dbReference>
<dbReference type="FunFam" id="3.40.50.720:FF:000104">
    <property type="entry name" value="Shikimate dehydrogenase (NADP(+))"/>
    <property type="match status" value="1"/>
</dbReference>
<dbReference type="Gene3D" id="3.40.50.10860">
    <property type="entry name" value="Leucine Dehydrogenase, chain A, domain 1"/>
    <property type="match status" value="1"/>
</dbReference>
<dbReference type="Gene3D" id="3.40.50.720">
    <property type="entry name" value="NAD(P)-binding Rossmann-like Domain"/>
    <property type="match status" value="1"/>
</dbReference>
<dbReference type="HAMAP" id="MF_00222">
    <property type="entry name" value="Shikimate_DH_AroE"/>
    <property type="match status" value="1"/>
</dbReference>
<dbReference type="InterPro" id="IPR046346">
    <property type="entry name" value="Aminoacid_DH-like_N_sf"/>
</dbReference>
<dbReference type="InterPro" id="IPR036291">
    <property type="entry name" value="NAD(P)-bd_dom_sf"/>
</dbReference>
<dbReference type="InterPro" id="IPR041121">
    <property type="entry name" value="SDH_C"/>
</dbReference>
<dbReference type="InterPro" id="IPR011342">
    <property type="entry name" value="Shikimate_DH"/>
</dbReference>
<dbReference type="InterPro" id="IPR013708">
    <property type="entry name" value="Shikimate_DH-bd_N"/>
</dbReference>
<dbReference type="InterPro" id="IPR022893">
    <property type="entry name" value="Shikimate_DH_fam"/>
</dbReference>
<dbReference type="InterPro" id="IPR006151">
    <property type="entry name" value="Shikm_DH/Glu-tRNA_Rdtase"/>
</dbReference>
<dbReference type="NCBIfam" id="TIGR00507">
    <property type="entry name" value="aroE"/>
    <property type="match status" value="1"/>
</dbReference>
<dbReference type="NCBIfam" id="NF001310">
    <property type="entry name" value="PRK00258.1-2"/>
    <property type="match status" value="1"/>
</dbReference>
<dbReference type="PANTHER" id="PTHR21089:SF1">
    <property type="entry name" value="BIFUNCTIONAL 3-DEHYDROQUINATE DEHYDRATASE_SHIKIMATE DEHYDROGENASE, CHLOROPLASTIC"/>
    <property type="match status" value="1"/>
</dbReference>
<dbReference type="PANTHER" id="PTHR21089">
    <property type="entry name" value="SHIKIMATE DEHYDROGENASE"/>
    <property type="match status" value="1"/>
</dbReference>
<dbReference type="Pfam" id="PF18317">
    <property type="entry name" value="SDH_C"/>
    <property type="match status" value="1"/>
</dbReference>
<dbReference type="Pfam" id="PF01488">
    <property type="entry name" value="Shikimate_DH"/>
    <property type="match status" value="1"/>
</dbReference>
<dbReference type="Pfam" id="PF08501">
    <property type="entry name" value="Shikimate_dh_N"/>
    <property type="match status" value="1"/>
</dbReference>
<dbReference type="SUPFAM" id="SSF53223">
    <property type="entry name" value="Aminoacid dehydrogenase-like, N-terminal domain"/>
    <property type="match status" value="1"/>
</dbReference>
<dbReference type="SUPFAM" id="SSF51735">
    <property type="entry name" value="NAD(P)-binding Rossmann-fold domains"/>
    <property type="match status" value="1"/>
</dbReference>
<organism>
    <name type="scientific">Shigella sonnei (strain Ss046)</name>
    <dbReference type="NCBI Taxonomy" id="300269"/>
    <lineage>
        <taxon>Bacteria</taxon>
        <taxon>Pseudomonadati</taxon>
        <taxon>Pseudomonadota</taxon>
        <taxon>Gammaproteobacteria</taxon>
        <taxon>Enterobacterales</taxon>
        <taxon>Enterobacteriaceae</taxon>
        <taxon>Shigella</taxon>
    </lineage>
</organism>
<evidence type="ECO:0000255" key="1">
    <source>
        <dbReference type="HAMAP-Rule" id="MF_00222"/>
    </source>
</evidence>
<name>AROE_SHISS</name>
<comment type="function">
    <text evidence="1">Involved in the biosynthesis of the chorismate, which leads to the biosynthesis of aromatic amino acids. Catalyzes the reversible NADPH linked reduction of 3-dehydroshikimate (DHSA) to yield shikimate (SA).</text>
</comment>
<comment type="catalytic activity">
    <reaction evidence="1">
        <text>shikimate + NADP(+) = 3-dehydroshikimate + NADPH + H(+)</text>
        <dbReference type="Rhea" id="RHEA:17737"/>
        <dbReference type="ChEBI" id="CHEBI:15378"/>
        <dbReference type="ChEBI" id="CHEBI:16630"/>
        <dbReference type="ChEBI" id="CHEBI:36208"/>
        <dbReference type="ChEBI" id="CHEBI:57783"/>
        <dbReference type="ChEBI" id="CHEBI:58349"/>
        <dbReference type="EC" id="1.1.1.25"/>
    </reaction>
</comment>
<comment type="pathway">
    <text evidence="1">Metabolic intermediate biosynthesis; chorismate biosynthesis; chorismate from D-erythrose 4-phosphate and phosphoenolpyruvate: step 4/7.</text>
</comment>
<comment type="subunit">
    <text evidence="1">Homodimer.</text>
</comment>
<comment type="similarity">
    <text evidence="1">Belongs to the shikimate dehydrogenase family.</text>
</comment>
<accession>Q3YWX7</accession>
<reference key="1">
    <citation type="journal article" date="2005" name="Nucleic Acids Res.">
        <title>Genome dynamics and diversity of Shigella species, the etiologic agents of bacillary dysentery.</title>
        <authorList>
            <person name="Yang F."/>
            <person name="Yang J."/>
            <person name="Zhang X."/>
            <person name="Chen L."/>
            <person name="Jiang Y."/>
            <person name="Yan Y."/>
            <person name="Tang X."/>
            <person name="Wang J."/>
            <person name="Xiong Z."/>
            <person name="Dong J."/>
            <person name="Xue Y."/>
            <person name="Zhu Y."/>
            <person name="Xu X."/>
            <person name="Sun L."/>
            <person name="Chen S."/>
            <person name="Nie H."/>
            <person name="Peng J."/>
            <person name="Xu J."/>
            <person name="Wang Y."/>
            <person name="Yuan Z."/>
            <person name="Wen Y."/>
            <person name="Yao Z."/>
            <person name="Shen Y."/>
            <person name="Qiang B."/>
            <person name="Hou Y."/>
            <person name="Yu J."/>
            <person name="Jin Q."/>
        </authorList>
    </citation>
    <scope>NUCLEOTIDE SEQUENCE [LARGE SCALE GENOMIC DNA]</scope>
    <source>
        <strain>Ss046</strain>
    </source>
</reference>
<sequence>METYAVFGNPIAHSKSPFIHQQFAQQLNIEHPYGRVLAPINDFINTLNAFFRAGGKGANVTVPFKEEAFARADELTERAALAGAVNTLKRLEDGRLLGDNTDGVGLLSDLERLSFIRPGLRILLIGAGGASRGVLLPLLSLDCAVTITNRTVSRAEELAKLFAHTGSIQALGMDELEGHEFDLIINATSSGISGDIPAIPSSLIHPGIYCYDMFYQKGKTPFLAWCEQRGSKRNADGLGMLVAQAAHAFLLWHGVLPDVEPVIKLLQQELSA</sequence>
<proteinExistence type="inferred from homology"/>
<feature type="chain" id="PRO_1000021335" description="Shikimate dehydrogenase (NADP(+))">
    <location>
        <begin position="1"/>
        <end position="272"/>
    </location>
</feature>
<feature type="active site" description="Proton acceptor" evidence="1">
    <location>
        <position position="65"/>
    </location>
</feature>
<feature type="binding site" evidence="1">
    <location>
        <begin position="14"/>
        <end position="16"/>
    </location>
    <ligand>
        <name>shikimate</name>
        <dbReference type="ChEBI" id="CHEBI:36208"/>
    </ligand>
</feature>
<feature type="binding site" evidence="1">
    <location>
        <position position="61"/>
    </location>
    <ligand>
        <name>shikimate</name>
        <dbReference type="ChEBI" id="CHEBI:36208"/>
    </ligand>
</feature>
<feature type="binding site" evidence="1">
    <location>
        <position position="77"/>
    </location>
    <ligand>
        <name>NADP(+)</name>
        <dbReference type="ChEBI" id="CHEBI:58349"/>
    </ligand>
</feature>
<feature type="binding site" evidence="1">
    <location>
        <position position="86"/>
    </location>
    <ligand>
        <name>shikimate</name>
        <dbReference type="ChEBI" id="CHEBI:36208"/>
    </ligand>
</feature>
<feature type="binding site" evidence="1">
    <location>
        <position position="102"/>
    </location>
    <ligand>
        <name>shikimate</name>
        <dbReference type="ChEBI" id="CHEBI:36208"/>
    </ligand>
</feature>
<feature type="binding site" evidence="1">
    <location>
        <begin position="126"/>
        <end position="130"/>
    </location>
    <ligand>
        <name>NADP(+)</name>
        <dbReference type="ChEBI" id="CHEBI:58349"/>
    </ligand>
</feature>
<feature type="binding site" evidence="1">
    <location>
        <begin position="149"/>
        <end position="154"/>
    </location>
    <ligand>
        <name>NADP(+)</name>
        <dbReference type="ChEBI" id="CHEBI:58349"/>
    </ligand>
</feature>
<feature type="binding site" evidence="1">
    <location>
        <position position="213"/>
    </location>
    <ligand>
        <name>NADP(+)</name>
        <dbReference type="ChEBI" id="CHEBI:58349"/>
    </ligand>
</feature>
<feature type="binding site" evidence="1">
    <location>
        <position position="215"/>
    </location>
    <ligand>
        <name>shikimate</name>
        <dbReference type="ChEBI" id="CHEBI:36208"/>
    </ligand>
</feature>
<feature type="binding site" evidence="1">
    <location>
        <position position="237"/>
    </location>
    <ligand>
        <name>NADP(+)</name>
        <dbReference type="ChEBI" id="CHEBI:58349"/>
    </ligand>
</feature>
<protein>
    <recommendedName>
        <fullName evidence="1">Shikimate dehydrogenase (NADP(+))</fullName>
        <shortName evidence="1">SDH</shortName>
        <ecNumber evidence="1">1.1.1.25</ecNumber>
    </recommendedName>
</protein>
<keyword id="KW-0028">Amino-acid biosynthesis</keyword>
<keyword id="KW-0057">Aromatic amino acid biosynthesis</keyword>
<keyword id="KW-0521">NADP</keyword>
<keyword id="KW-0560">Oxidoreductase</keyword>
<keyword id="KW-1185">Reference proteome</keyword>
<gene>
    <name evidence="1" type="primary">aroE</name>
    <name type="ordered locus">SSON_3422</name>
</gene>